<sequence length="294" mass="31886">MFLMEKLLERVNYILEALPYITQYSGKTVVIKYGGAAMAKADLKESFAKDIVLLKYVGIHPVIVHGGGPEINRLLDNLKIPTEFVHGHRVTDNQTMEIVEMVLTGKVNKQIVSLINSQGGKAVGISGKDGNLAKATKAPIEIELEGKEKQLFDVGLVGKIESVNPEILHNLQKAGFIPVISPVAENSEGESLNINADTFAGEIAGALKAEKLILLTDTQGILIDNQLVTGLNRNKVKDYIRKGEISGGMIPKVECCLTAIDQGVRRTHIIDGRVSHSILIEIFTDQGIGSLIES</sequence>
<dbReference type="EC" id="2.7.2.8" evidence="1"/>
<dbReference type="EMBL" id="AE010301">
    <property type="protein sequence ID" value="AAN51672.1"/>
    <property type="molecule type" value="Genomic_DNA"/>
</dbReference>
<dbReference type="RefSeq" id="NP_714657.1">
    <property type="nucleotide sequence ID" value="NC_004343.2"/>
</dbReference>
<dbReference type="SMR" id="P59299"/>
<dbReference type="FunCoup" id="P59299">
    <property type="interactions" value="112"/>
</dbReference>
<dbReference type="STRING" id="189518.LB_114"/>
<dbReference type="PaxDb" id="189518-LB_114"/>
<dbReference type="EnsemblBacteria" id="AAN51672">
    <property type="protein sequence ID" value="AAN51672"/>
    <property type="gene ID" value="LB_114"/>
</dbReference>
<dbReference type="KEGG" id="lil:LB_114"/>
<dbReference type="PATRIC" id="fig|189518.3.peg.4441"/>
<dbReference type="HOGENOM" id="CLU_053680_0_0_12"/>
<dbReference type="InParanoid" id="P59299"/>
<dbReference type="OrthoDB" id="9803155at2"/>
<dbReference type="UniPathway" id="UPA00068">
    <property type="reaction ID" value="UER00107"/>
</dbReference>
<dbReference type="Proteomes" id="UP000001408">
    <property type="component" value="Chromosome II"/>
</dbReference>
<dbReference type="GO" id="GO:0005737">
    <property type="term" value="C:cytoplasm"/>
    <property type="evidence" value="ECO:0007669"/>
    <property type="project" value="UniProtKB-SubCell"/>
</dbReference>
<dbReference type="GO" id="GO:0003991">
    <property type="term" value="F:acetylglutamate kinase activity"/>
    <property type="evidence" value="ECO:0000318"/>
    <property type="project" value="GO_Central"/>
</dbReference>
<dbReference type="GO" id="GO:0005524">
    <property type="term" value="F:ATP binding"/>
    <property type="evidence" value="ECO:0007669"/>
    <property type="project" value="UniProtKB-UniRule"/>
</dbReference>
<dbReference type="GO" id="GO:0042450">
    <property type="term" value="P:arginine biosynthetic process via ornithine"/>
    <property type="evidence" value="ECO:0007669"/>
    <property type="project" value="UniProtKB-UniRule"/>
</dbReference>
<dbReference type="GO" id="GO:0006526">
    <property type="term" value="P:L-arginine biosynthetic process"/>
    <property type="evidence" value="ECO:0000318"/>
    <property type="project" value="GO_Central"/>
</dbReference>
<dbReference type="CDD" id="cd04250">
    <property type="entry name" value="AAK_NAGK-C"/>
    <property type="match status" value="1"/>
</dbReference>
<dbReference type="FunFam" id="3.40.1160.10:FF:000004">
    <property type="entry name" value="Acetylglutamate kinase"/>
    <property type="match status" value="1"/>
</dbReference>
<dbReference type="Gene3D" id="3.40.1160.10">
    <property type="entry name" value="Acetylglutamate kinase-like"/>
    <property type="match status" value="1"/>
</dbReference>
<dbReference type="HAMAP" id="MF_00082">
    <property type="entry name" value="ArgB"/>
    <property type="match status" value="1"/>
</dbReference>
<dbReference type="InterPro" id="IPR036393">
    <property type="entry name" value="AceGlu_kinase-like_sf"/>
</dbReference>
<dbReference type="InterPro" id="IPR004662">
    <property type="entry name" value="AcgluKinase_fam"/>
</dbReference>
<dbReference type="InterPro" id="IPR037528">
    <property type="entry name" value="ArgB"/>
</dbReference>
<dbReference type="InterPro" id="IPR001048">
    <property type="entry name" value="Asp/Glu/Uridylate_kinase"/>
</dbReference>
<dbReference type="InterPro" id="IPR041727">
    <property type="entry name" value="NAGK-C"/>
</dbReference>
<dbReference type="NCBIfam" id="TIGR00761">
    <property type="entry name" value="argB"/>
    <property type="match status" value="1"/>
</dbReference>
<dbReference type="PANTHER" id="PTHR23342">
    <property type="entry name" value="N-ACETYLGLUTAMATE SYNTHASE"/>
    <property type="match status" value="1"/>
</dbReference>
<dbReference type="PANTHER" id="PTHR23342:SF0">
    <property type="entry name" value="N-ACETYLGLUTAMATE SYNTHASE, MITOCHONDRIAL"/>
    <property type="match status" value="1"/>
</dbReference>
<dbReference type="Pfam" id="PF00696">
    <property type="entry name" value="AA_kinase"/>
    <property type="match status" value="1"/>
</dbReference>
<dbReference type="PIRSF" id="PIRSF000728">
    <property type="entry name" value="NAGK"/>
    <property type="match status" value="1"/>
</dbReference>
<dbReference type="SUPFAM" id="SSF53633">
    <property type="entry name" value="Carbamate kinase-like"/>
    <property type="match status" value="1"/>
</dbReference>
<accession>P59299</accession>
<organism>
    <name type="scientific">Leptospira interrogans serogroup Icterohaemorrhagiae serovar Lai (strain 56601)</name>
    <dbReference type="NCBI Taxonomy" id="189518"/>
    <lineage>
        <taxon>Bacteria</taxon>
        <taxon>Pseudomonadati</taxon>
        <taxon>Spirochaetota</taxon>
        <taxon>Spirochaetia</taxon>
        <taxon>Leptospirales</taxon>
        <taxon>Leptospiraceae</taxon>
        <taxon>Leptospira</taxon>
    </lineage>
</organism>
<proteinExistence type="inferred from homology"/>
<protein>
    <recommendedName>
        <fullName evidence="1">Acetylglutamate kinase</fullName>
        <ecNumber evidence="1">2.7.2.8</ecNumber>
    </recommendedName>
    <alternativeName>
        <fullName evidence="1">N-acetyl-L-glutamate 5-phosphotransferase</fullName>
    </alternativeName>
    <alternativeName>
        <fullName evidence="1">NAG kinase</fullName>
        <shortName evidence="1">NAGK</shortName>
    </alternativeName>
</protein>
<name>ARGB_LEPIN</name>
<gene>
    <name evidence="1" type="primary">argB</name>
    <name type="ordered locus">LB_114</name>
</gene>
<comment type="function">
    <text evidence="1">Catalyzes the ATP-dependent phosphorylation of N-acetyl-L-glutamate.</text>
</comment>
<comment type="catalytic activity">
    <reaction evidence="1">
        <text>N-acetyl-L-glutamate + ATP = N-acetyl-L-glutamyl 5-phosphate + ADP</text>
        <dbReference type="Rhea" id="RHEA:14629"/>
        <dbReference type="ChEBI" id="CHEBI:30616"/>
        <dbReference type="ChEBI" id="CHEBI:44337"/>
        <dbReference type="ChEBI" id="CHEBI:57936"/>
        <dbReference type="ChEBI" id="CHEBI:456216"/>
        <dbReference type="EC" id="2.7.2.8"/>
    </reaction>
</comment>
<comment type="pathway">
    <text evidence="1">Amino-acid biosynthesis; L-arginine biosynthesis; N(2)-acetyl-L-ornithine from L-glutamate: step 2/4.</text>
</comment>
<comment type="subcellular location">
    <subcellularLocation>
        <location evidence="1">Cytoplasm</location>
    </subcellularLocation>
</comment>
<comment type="similarity">
    <text evidence="1">Belongs to the acetylglutamate kinase family. ArgB subfamily.</text>
</comment>
<feature type="chain" id="PRO_0000112626" description="Acetylglutamate kinase">
    <location>
        <begin position="1"/>
        <end position="294"/>
    </location>
</feature>
<feature type="binding site" evidence="1">
    <location>
        <begin position="67"/>
        <end position="68"/>
    </location>
    <ligand>
        <name>substrate</name>
    </ligand>
</feature>
<feature type="binding site" evidence="1">
    <location>
        <position position="89"/>
    </location>
    <ligand>
        <name>substrate</name>
    </ligand>
</feature>
<feature type="binding site" evidence="1">
    <location>
        <position position="193"/>
    </location>
    <ligand>
        <name>substrate</name>
    </ligand>
</feature>
<feature type="site" description="Transition state stabilizer" evidence="1">
    <location>
        <position position="32"/>
    </location>
</feature>
<feature type="site" description="Transition state stabilizer" evidence="1">
    <location>
        <position position="252"/>
    </location>
</feature>
<keyword id="KW-0028">Amino-acid biosynthesis</keyword>
<keyword id="KW-0055">Arginine biosynthesis</keyword>
<keyword id="KW-0067">ATP-binding</keyword>
<keyword id="KW-0963">Cytoplasm</keyword>
<keyword id="KW-0418">Kinase</keyword>
<keyword id="KW-0547">Nucleotide-binding</keyword>
<keyword id="KW-1185">Reference proteome</keyword>
<keyword id="KW-0808">Transferase</keyword>
<evidence type="ECO:0000255" key="1">
    <source>
        <dbReference type="HAMAP-Rule" id="MF_00082"/>
    </source>
</evidence>
<reference key="1">
    <citation type="journal article" date="2003" name="Nature">
        <title>Unique physiological and pathogenic features of Leptospira interrogans revealed by whole-genome sequencing.</title>
        <authorList>
            <person name="Ren S.-X."/>
            <person name="Fu G."/>
            <person name="Jiang X.-G."/>
            <person name="Zeng R."/>
            <person name="Miao Y.-G."/>
            <person name="Xu H."/>
            <person name="Zhang Y.-X."/>
            <person name="Xiong H."/>
            <person name="Lu G."/>
            <person name="Lu L.-F."/>
            <person name="Jiang H.-Q."/>
            <person name="Jia J."/>
            <person name="Tu Y.-F."/>
            <person name="Jiang J.-X."/>
            <person name="Gu W.-Y."/>
            <person name="Zhang Y.-Q."/>
            <person name="Cai Z."/>
            <person name="Sheng H.-H."/>
            <person name="Yin H.-F."/>
            <person name="Zhang Y."/>
            <person name="Zhu G.-F."/>
            <person name="Wan M."/>
            <person name="Huang H.-L."/>
            <person name="Qian Z."/>
            <person name="Wang S.-Y."/>
            <person name="Ma W."/>
            <person name="Yao Z.-J."/>
            <person name="Shen Y."/>
            <person name="Qiang B.-Q."/>
            <person name="Xia Q.-C."/>
            <person name="Guo X.-K."/>
            <person name="Danchin A."/>
            <person name="Saint Girons I."/>
            <person name="Somerville R.L."/>
            <person name="Wen Y.-M."/>
            <person name="Shi M.-H."/>
            <person name="Chen Z."/>
            <person name="Xu J.-G."/>
            <person name="Zhao G.-P."/>
        </authorList>
    </citation>
    <scope>NUCLEOTIDE SEQUENCE [LARGE SCALE GENOMIC DNA]</scope>
    <source>
        <strain>56601</strain>
    </source>
</reference>